<reference key="1">
    <citation type="journal article" date="2010" name="Genome Biol. Evol.">
        <title>Continuing evolution of Burkholderia mallei through genome reduction and large-scale rearrangements.</title>
        <authorList>
            <person name="Losada L."/>
            <person name="Ronning C.M."/>
            <person name="DeShazer D."/>
            <person name="Woods D."/>
            <person name="Fedorova N."/>
            <person name="Kim H.S."/>
            <person name="Shabalina S.A."/>
            <person name="Pearson T.R."/>
            <person name="Brinkac L."/>
            <person name="Tan P."/>
            <person name="Nandi T."/>
            <person name="Crabtree J."/>
            <person name="Badger J."/>
            <person name="Beckstrom-Sternberg S."/>
            <person name="Saqib M."/>
            <person name="Schutzer S.E."/>
            <person name="Keim P."/>
            <person name="Nierman W.C."/>
        </authorList>
    </citation>
    <scope>NUCLEOTIDE SEQUENCE [LARGE SCALE GENOMIC DNA]</scope>
    <source>
        <strain>NCTC 10229</strain>
    </source>
</reference>
<comment type="function">
    <text evidence="1">This protein binds specifically to 23S rRNA; its binding is stimulated by other ribosomal proteins, e.g. L4, L17, and L20. It is important during the early stages of 50S assembly. It makes multiple contacts with different domains of the 23S rRNA in the assembled 50S subunit and ribosome (By similarity).</text>
</comment>
<comment type="function">
    <text evidence="1">The globular domain of the protein is located near the polypeptide exit tunnel on the outside of the subunit, while an extended beta-hairpin is found that lines the wall of the exit tunnel in the center of the 70S ribosome.</text>
</comment>
<comment type="subunit">
    <text evidence="1">Part of the 50S ribosomal subunit.</text>
</comment>
<comment type="similarity">
    <text evidence="1">Belongs to the universal ribosomal protein uL22 family.</text>
</comment>
<accession>A2S7I1</accession>
<feature type="chain" id="PRO_1000052547" description="Large ribosomal subunit protein uL22">
    <location>
        <begin position="1"/>
        <end position="109"/>
    </location>
</feature>
<proteinExistence type="inferred from homology"/>
<name>RL22_BURM9</name>
<keyword id="KW-0687">Ribonucleoprotein</keyword>
<keyword id="KW-0689">Ribosomal protein</keyword>
<keyword id="KW-0694">RNA-binding</keyword>
<keyword id="KW-0699">rRNA-binding</keyword>
<dbReference type="EMBL" id="CP000546">
    <property type="protein sequence ID" value="ABN01470.1"/>
    <property type="molecule type" value="Genomic_DNA"/>
</dbReference>
<dbReference type="RefSeq" id="WP_004199272.1">
    <property type="nucleotide sequence ID" value="NC_008836.1"/>
</dbReference>
<dbReference type="SMR" id="A2S7I1"/>
<dbReference type="GeneID" id="98107155"/>
<dbReference type="KEGG" id="bml:BMA10229_A1929"/>
<dbReference type="HOGENOM" id="CLU_083987_3_3_4"/>
<dbReference type="Proteomes" id="UP000002283">
    <property type="component" value="Chromosome I"/>
</dbReference>
<dbReference type="GO" id="GO:0022625">
    <property type="term" value="C:cytosolic large ribosomal subunit"/>
    <property type="evidence" value="ECO:0007669"/>
    <property type="project" value="TreeGrafter"/>
</dbReference>
<dbReference type="GO" id="GO:0019843">
    <property type="term" value="F:rRNA binding"/>
    <property type="evidence" value="ECO:0007669"/>
    <property type="project" value="UniProtKB-UniRule"/>
</dbReference>
<dbReference type="GO" id="GO:0003735">
    <property type="term" value="F:structural constituent of ribosome"/>
    <property type="evidence" value="ECO:0007669"/>
    <property type="project" value="InterPro"/>
</dbReference>
<dbReference type="GO" id="GO:0006412">
    <property type="term" value="P:translation"/>
    <property type="evidence" value="ECO:0007669"/>
    <property type="project" value="UniProtKB-UniRule"/>
</dbReference>
<dbReference type="CDD" id="cd00336">
    <property type="entry name" value="Ribosomal_L22"/>
    <property type="match status" value="1"/>
</dbReference>
<dbReference type="FunFam" id="3.90.470.10:FF:000001">
    <property type="entry name" value="50S ribosomal protein L22"/>
    <property type="match status" value="1"/>
</dbReference>
<dbReference type="Gene3D" id="3.90.470.10">
    <property type="entry name" value="Ribosomal protein L22/L17"/>
    <property type="match status" value="1"/>
</dbReference>
<dbReference type="HAMAP" id="MF_01331_B">
    <property type="entry name" value="Ribosomal_uL22_B"/>
    <property type="match status" value="1"/>
</dbReference>
<dbReference type="InterPro" id="IPR001063">
    <property type="entry name" value="Ribosomal_uL22"/>
</dbReference>
<dbReference type="InterPro" id="IPR005727">
    <property type="entry name" value="Ribosomal_uL22_bac/chlpt-type"/>
</dbReference>
<dbReference type="InterPro" id="IPR047867">
    <property type="entry name" value="Ribosomal_uL22_bac/org-type"/>
</dbReference>
<dbReference type="InterPro" id="IPR018260">
    <property type="entry name" value="Ribosomal_uL22_CS"/>
</dbReference>
<dbReference type="InterPro" id="IPR036394">
    <property type="entry name" value="Ribosomal_uL22_sf"/>
</dbReference>
<dbReference type="NCBIfam" id="TIGR01044">
    <property type="entry name" value="rplV_bact"/>
    <property type="match status" value="1"/>
</dbReference>
<dbReference type="PANTHER" id="PTHR13501">
    <property type="entry name" value="CHLOROPLAST 50S RIBOSOMAL PROTEIN L22-RELATED"/>
    <property type="match status" value="1"/>
</dbReference>
<dbReference type="PANTHER" id="PTHR13501:SF8">
    <property type="entry name" value="LARGE RIBOSOMAL SUBUNIT PROTEIN UL22M"/>
    <property type="match status" value="1"/>
</dbReference>
<dbReference type="Pfam" id="PF00237">
    <property type="entry name" value="Ribosomal_L22"/>
    <property type="match status" value="1"/>
</dbReference>
<dbReference type="SUPFAM" id="SSF54843">
    <property type="entry name" value="Ribosomal protein L22"/>
    <property type="match status" value="1"/>
</dbReference>
<dbReference type="PROSITE" id="PS00464">
    <property type="entry name" value="RIBOSOMAL_L22"/>
    <property type="match status" value="1"/>
</dbReference>
<gene>
    <name evidence="1" type="primary">rplV</name>
    <name type="ordered locus">BMA10229_A1929</name>
</gene>
<protein>
    <recommendedName>
        <fullName evidence="1">Large ribosomal subunit protein uL22</fullName>
    </recommendedName>
    <alternativeName>
        <fullName evidence="2">50S ribosomal protein L22</fullName>
    </alternativeName>
</protein>
<organism>
    <name type="scientific">Burkholderia mallei (strain NCTC 10229)</name>
    <dbReference type="NCBI Taxonomy" id="412022"/>
    <lineage>
        <taxon>Bacteria</taxon>
        <taxon>Pseudomonadati</taxon>
        <taxon>Pseudomonadota</taxon>
        <taxon>Betaproteobacteria</taxon>
        <taxon>Burkholderiales</taxon>
        <taxon>Burkholderiaceae</taxon>
        <taxon>Burkholderia</taxon>
        <taxon>pseudomallei group</taxon>
    </lineage>
</organism>
<sequence length="109" mass="11816">MEVKAIHRGARISAQKTRLVADQIRGLPVDKALNVLTFSPKKAAGIVKKVVLSAIANAEHNEGADIDELKIKSIYVDKAASLKRFTARAKGRGNRIEKQSCHITVTVGN</sequence>
<evidence type="ECO:0000255" key="1">
    <source>
        <dbReference type="HAMAP-Rule" id="MF_01331"/>
    </source>
</evidence>
<evidence type="ECO:0000305" key="2"/>